<sequence>MALNIPFRNAYYRFASSYSFLFFISWSLWWSLYAIWLKGHLGLTGTELGTLYSVNQFTSILFMMFYGIVQDKLGLKKPLIWCMSFILVLTGPFMIYVYEPLLQSNFSVGLILGALFFGLGYLAGCGLLDSFTEKMARNFHFEYGTARAWGSFGYAIGAFFAGIFFSISPHINFWLVSLFGAVFMMINMRFKDKDHQCIAADAGGVKKEDFIAVFKDRNFWVFVIFIVGTWSFYNIFDQQLFPVFYAGLFESHDVGTRLYGYLNSFQVVLEALCMAIIPFFVNRVGPKNALLIGVVIMALRILSCALFVNPWIISLVKLLHAIEVPLCVISVFKYSVANFDKRLSSTIFLIGFQIASSLGIVLLSTPTGILFDHAGYQTVFFAISGIVCLMLLFGIFFLSKKREQIVMETPVPSAI</sequence>
<proteinExistence type="evidence at protein level"/>
<evidence type="ECO:0000255" key="1"/>
<evidence type="ECO:0000269" key="2">
    <source>
    </source>
</evidence>
<evidence type="ECO:0000269" key="3">
    <source>
    </source>
</evidence>
<evidence type="ECO:0000269" key="4">
    <source>
    </source>
</evidence>
<evidence type="ECO:0000303" key="5">
    <source>
    </source>
</evidence>
<evidence type="ECO:0000303" key="6">
    <source>
    </source>
</evidence>
<evidence type="ECO:0000305" key="7"/>
<protein>
    <recommendedName>
        <fullName evidence="6">Sucrose permease</fullName>
    </recommendedName>
    <alternativeName>
        <fullName evidence="7">Sucrose transport protein</fullName>
    </alternativeName>
</protein>
<feature type="chain" id="PRO_0000196188" description="Sucrose permease">
    <location>
        <begin position="1"/>
        <end position="415"/>
    </location>
</feature>
<feature type="topological domain" description="Cytoplasmic" evidence="7">
    <location>
        <begin position="1"/>
        <end position="16"/>
    </location>
</feature>
<feature type="transmembrane region" description="Helical" evidence="1">
    <location>
        <begin position="17"/>
        <end position="37"/>
    </location>
</feature>
<feature type="topological domain" description="Periplasmic" evidence="7">
    <location>
        <begin position="38"/>
        <end position="48"/>
    </location>
</feature>
<feature type="transmembrane region" description="Helical" evidence="1">
    <location>
        <begin position="49"/>
        <end position="69"/>
    </location>
</feature>
<feature type="topological domain" description="Cytoplasmic" evidence="7">
    <location>
        <begin position="70"/>
        <end position="77"/>
    </location>
</feature>
<feature type="transmembrane region" description="Helical" evidence="1">
    <location>
        <begin position="78"/>
        <end position="98"/>
    </location>
</feature>
<feature type="topological domain" description="Periplasmic" evidence="7">
    <location>
        <begin position="99"/>
        <end position="107"/>
    </location>
</feature>
<feature type="transmembrane region" description="Helical" evidence="1">
    <location>
        <begin position="108"/>
        <end position="128"/>
    </location>
</feature>
<feature type="topological domain" description="Cytoplasmic" evidence="7">
    <location>
        <begin position="129"/>
        <end position="147"/>
    </location>
</feature>
<feature type="transmembrane region" description="Helical" evidence="1">
    <location>
        <begin position="148"/>
        <end position="167"/>
    </location>
</feature>
<feature type="topological domain" description="Periplasmic" evidence="7">
    <location>
        <begin position="168"/>
        <end position="170"/>
    </location>
</feature>
<feature type="transmembrane region" description="Helical" evidence="1">
    <location>
        <begin position="171"/>
        <end position="190"/>
    </location>
</feature>
<feature type="topological domain" description="Cytoplasmic" evidence="7">
    <location>
        <begin position="191"/>
        <end position="220"/>
    </location>
</feature>
<feature type="transmembrane region" description="Helical" evidence="1">
    <location>
        <begin position="221"/>
        <end position="241"/>
    </location>
</feature>
<feature type="topological domain" description="Periplasmic" evidence="7">
    <location>
        <begin position="242"/>
        <end position="260"/>
    </location>
</feature>
<feature type="transmembrane region" description="Helical" evidence="1">
    <location>
        <begin position="261"/>
        <end position="281"/>
    </location>
</feature>
<feature type="topological domain" description="Cytoplasmic" evidence="7">
    <location>
        <begin position="282"/>
        <end position="287"/>
    </location>
</feature>
<feature type="transmembrane region" description="Helical" evidence="1">
    <location>
        <begin position="288"/>
        <end position="308"/>
    </location>
</feature>
<feature type="topological domain" description="Periplasmic" evidence="7">
    <location>
        <begin position="309"/>
        <end position="311"/>
    </location>
</feature>
<feature type="transmembrane region" description="Helical" evidence="1">
    <location>
        <begin position="312"/>
        <end position="332"/>
    </location>
</feature>
<feature type="topological domain" description="Cytoplasmic" evidence="7">
    <location>
        <begin position="333"/>
        <end position="342"/>
    </location>
</feature>
<feature type="transmembrane region" description="Helical" evidence="1">
    <location>
        <begin position="343"/>
        <end position="363"/>
    </location>
</feature>
<feature type="topological domain" description="Periplasmic" evidence="7">
    <location>
        <begin position="364"/>
        <end position="377"/>
    </location>
</feature>
<feature type="transmembrane region" description="Helical" evidence="1">
    <location>
        <begin position="378"/>
        <end position="398"/>
    </location>
</feature>
<feature type="topological domain" description="Cytoplasmic" evidence="7">
    <location>
        <begin position="399"/>
        <end position="415"/>
    </location>
</feature>
<organism>
    <name type="scientific">Escherichia coli</name>
    <dbReference type="NCBI Taxonomy" id="562"/>
    <lineage>
        <taxon>Bacteria</taxon>
        <taxon>Pseudomonadati</taxon>
        <taxon>Pseudomonadota</taxon>
        <taxon>Gammaproteobacteria</taxon>
        <taxon>Enterobacterales</taxon>
        <taxon>Enterobacteriaceae</taxon>
        <taxon>Escherichia</taxon>
    </lineage>
</organism>
<accession>P30000</accession>
<comment type="function">
    <text evidence="2 3 4">Responsible for transport of sucrose into the cell, with the concomitant import of a proton (symport system) (PubMed:22106930, PubMed:7535526). Can also transport maltose, fructose or lactulose, but not glucose, lactose or melibiose (PubMed:19294451, PubMed:22106930, PubMed:7535526). The substrate specificity is directed toward the fructofuranosyl moiety of the substrate (PubMed:22106930).</text>
</comment>
<comment type="biophysicochemical properties">
    <kinetics>
        <KM evidence="4">1 mM for sucrose</KM>
        <KM evidence="2">0.37 mM for sucrose</KM>
        <KM evidence="2">0.59 mM for maltose</KM>
        <KM evidence="3">6.7 mM for sucrose</KM>
        <KM evidence="3">36 mM for fructose</KM>
        <Vmax evidence="4">23.0 nmol/min/mg enzyme with sucrose as substrate</Vmax>
        <Vmax evidence="2">83.0 nmol/min/mg enzyme with sucrose as substrate</Vmax>
        <Vmax evidence="2">111.0 nmol/min/mg enzyme with maltose as substrate</Vmax>
        <Vmax evidence="3">130.0 nmol/min/mg enzyme with sucrose as substrate</Vmax>
        <Vmax evidence="3">60.0 nmol/min/mg enzyme with fructose as substrate</Vmax>
    </kinetics>
</comment>
<comment type="pathway">
    <text>Glycan biosynthesis; sucrose metabolism.</text>
</comment>
<comment type="subcellular location">
    <subcellularLocation>
        <location evidence="4">Cell inner membrane</location>
        <topology evidence="1">Multi-pass membrane protein</topology>
    </subcellularLocation>
</comment>
<comment type="similarity">
    <text evidence="7">Belongs to the major facilitator superfamily. Oligosaccharide:H(+) symporter (OHS) (TC 2.A.1.5) family.</text>
</comment>
<gene>
    <name evidence="5" type="primary">cscB</name>
</gene>
<name>CSCB_ECOLX</name>
<reference key="1">
    <citation type="journal article" date="1992" name="Mol. Gen. Genet.">
        <title>Characterization of a chromosomally encoded, non-PTS metabolic pathway for sucrose utilization in Escherichia coli EC3132.</title>
        <authorList>
            <person name="Bockmann J."/>
            <person name="Heuel H."/>
            <person name="Lengeler J.W."/>
        </authorList>
    </citation>
    <scope>NUCLEOTIDE SEQUENCE [GENOMIC DNA]</scope>
    <source>
        <strain>EC3132</strain>
    </source>
</reference>
<reference key="2">
    <citation type="journal article" date="1995" name="Biochem. Biophys. Res. Commun.">
        <title>Active transport by the CscB permease in Escherichia coli K-12.</title>
        <authorList>
            <person name="Sahin-Toth M."/>
            <person name="Frillingos S."/>
            <person name="Lengeler J.W."/>
            <person name="Kaback H.R."/>
        </authorList>
    </citation>
    <scope>FUNCTION</scope>
    <scope>BIOPHYSICOCHEMICAL PROPERTIES</scope>
    <scope>SUBCELLULAR LOCATION</scope>
</reference>
<reference key="3">
    <citation type="journal article" date="2009" name="J. Membr. Biol.">
        <title>Evidence for the transport of maltose by the sucrose permease, CscB, of Escherichia coli.</title>
        <authorList>
            <person name="Peng Y."/>
            <person name="Kumar S."/>
            <person name="Hernandez R.L."/>
            <person name="Jones S.E."/>
            <person name="Cadle K.M."/>
            <person name="Smith K.P."/>
            <person name="Varela M.F."/>
        </authorList>
    </citation>
    <scope>FUNCTION</scope>
    <scope>BIOPHYSICOCHEMICAL PROPERTIES</scope>
</reference>
<reference key="4">
    <citation type="journal article" date="2011" name="Biochemistry">
        <title>Sugar recognition by CscB and LacY.</title>
        <authorList>
            <person name="Sugihara J."/>
            <person name="Smirnova I."/>
            <person name="Kasho V."/>
            <person name="Kaback H.R."/>
        </authorList>
    </citation>
    <scope>FUNCTION</scope>
    <scope>BIOPHYSICOCHEMICAL PROPERTIES</scope>
</reference>
<dbReference type="EMBL" id="X63740">
    <property type="protein sequence ID" value="CAA45274.1"/>
    <property type="molecule type" value="Genomic_DNA"/>
</dbReference>
<dbReference type="EMBL" id="X81461">
    <property type="protein sequence ID" value="CAA57217.1"/>
    <property type="molecule type" value="Genomic_DNA"/>
</dbReference>
<dbReference type="PIR" id="S30107">
    <property type="entry name" value="GRECST"/>
</dbReference>
<dbReference type="RefSeq" id="WP_001197021.1">
    <property type="nucleotide sequence ID" value="NZ_WXYY01000002.1"/>
</dbReference>
<dbReference type="SMR" id="P30000"/>
<dbReference type="STRING" id="585034.ECIAI1_2426"/>
<dbReference type="TCDB" id="2.A.1.5.3">
    <property type="family name" value="the major facilitator superfamily (mfs)"/>
</dbReference>
<dbReference type="UniPathway" id="UPA00238"/>
<dbReference type="GO" id="GO:0005886">
    <property type="term" value="C:plasma membrane"/>
    <property type="evidence" value="ECO:0007669"/>
    <property type="project" value="UniProtKB-SubCell"/>
</dbReference>
<dbReference type="GO" id="GO:0030395">
    <property type="term" value="F:lactose binding"/>
    <property type="evidence" value="ECO:0007669"/>
    <property type="project" value="TreeGrafter"/>
</dbReference>
<dbReference type="GO" id="GO:0015528">
    <property type="term" value="F:lactose:proton symporter activity"/>
    <property type="evidence" value="ECO:0007669"/>
    <property type="project" value="TreeGrafter"/>
</dbReference>
<dbReference type="GO" id="GO:0005985">
    <property type="term" value="P:sucrose metabolic process"/>
    <property type="evidence" value="ECO:0007669"/>
    <property type="project" value="UniProtKB-UniPathway"/>
</dbReference>
<dbReference type="CDD" id="cd06172">
    <property type="entry name" value="MFS_LacY"/>
    <property type="match status" value="1"/>
</dbReference>
<dbReference type="Gene3D" id="1.20.1250.20">
    <property type="entry name" value="MFS general substrate transporter like domains"/>
    <property type="match status" value="2"/>
</dbReference>
<dbReference type="InterPro" id="IPR000576">
    <property type="entry name" value="LacY/RafB_perm_fam"/>
</dbReference>
<dbReference type="InterPro" id="IPR018457">
    <property type="entry name" value="LacY/RafB_perm_fam_CS"/>
</dbReference>
<dbReference type="InterPro" id="IPR020846">
    <property type="entry name" value="MFS_dom"/>
</dbReference>
<dbReference type="InterPro" id="IPR036259">
    <property type="entry name" value="MFS_trans_sf"/>
</dbReference>
<dbReference type="NCBIfam" id="TIGR00882">
    <property type="entry name" value="2A0105"/>
    <property type="match status" value="1"/>
</dbReference>
<dbReference type="NCBIfam" id="NF007077">
    <property type="entry name" value="PRK09528.1"/>
    <property type="match status" value="1"/>
</dbReference>
<dbReference type="PANTHER" id="PTHR23522:SF10">
    <property type="entry name" value="3-PHENYLPROPIONIC ACID TRANSPORTER-RELATED"/>
    <property type="match status" value="1"/>
</dbReference>
<dbReference type="PANTHER" id="PTHR23522">
    <property type="entry name" value="BLL5896 PROTEIN"/>
    <property type="match status" value="1"/>
</dbReference>
<dbReference type="Pfam" id="PF01306">
    <property type="entry name" value="LacY_symp"/>
    <property type="match status" value="1"/>
</dbReference>
<dbReference type="PRINTS" id="PR00174">
    <property type="entry name" value="LACYSMPORT"/>
</dbReference>
<dbReference type="SUPFAM" id="SSF103473">
    <property type="entry name" value="MFS general substrate transporter"/>
    <property type="match status" value="1"/>
</dbReference>
<dbReference type="PROSITE" id="PS00896">
    <property type="entry name" value="LACY_1"/>
    <property type="match status" value="1"/>
</dbReference>
<dbReference type="PROSITE" id="PS00897">
    <property type="entry name" value="LACY_2"/>
    <property type="match status" value="1"/>
</dbReference>
<dbReference type="PROSITE" id="PS50850">
    <property type="entry name" value="MFS"/>
    <property type="match status" value="1"/>
</dbReference>
<keyword id="KW-0997">Cell inner membrane</keyword>
<keyword id="KW-1003">Cell membrane</keyword>
<keyword id="KW-0472">Membrane</keyword>
<keyword id="KW-0762">Sugar transport</keyword>
<keyword id="KW-0769">Symport</keyword>
<keyword id="KW-0812">Transmembrane</keyword>
<keyword id="KW-1133">Transmembrane helix</keyword>
<keyword id="KW-0813">Transport</keyword>